<organism>
    <name type="scientific">Zea mays</name>
    <name type="common">Maize</name>
    <dbReference type="NCBI Taxonomy" id="4577"/>
    <lineage>
        <taxon>Eukaryota</taxon>
        <taxon>Viridiplantae</taxon>
        <taxon>Streptophyta</taxon>
        <taxon>Embryophyta</taxon>
        <taxon>Tracheophyta</taxon>
        <taxon>Spermatophyta</taxon>
        <taxon>Magnoliopsida</taxon>
        <taxon>Liliopsida</taxon>
        <taxon>Poales</taxon>
        <taxon>Poaceae</taxon>
        <taxon>PACMAD clade</taxon>
        <taxon>Panicoideae</taxon>
        <taxon>Andropogonodae</taxon>
        <taxon>Andropogoneae</taxon>
        <taxon>Tripsacinae</taxon>
        <taxon>Zea</taxon>
    </lineage>
</organism>
<sequence length="386" mass="40941">MVARSPNAKPDRQKAAALAAAAALNPALLRETLKKVDRCMARLQELQYTVAGGAKVVSGVSLSPRSTRGYLRTSLRCKQETVRMRGGASAQKRSPSGKFGGGVGGEGAQWRRMSLPAMLLGETVLEIVQASQFARDIVTAAGATNREPPRTPKPAPRTRKPAAGEPTPLRARRAREKQSHRGGAATRGADAATPPSRSRVRSRIQFKPVSPVAVGRPSVSANRVSPKNRPWAKKAVMFPNPTFHASTSAATDPCATPSPSKKQKRLYKTRSPVAARQTPHKFLVKSPPSALGSKLRMHGKALPARPAAVSPPPPVKAQASPAKTRRCSFSPSRLATRLMSPIKARLSLGRSRDSGVGVGGGPMSGLKQRPGVSLTVRTVSSKISSR</sequence>
<accession>Q9FUH9</accession>
<accession>C0PM98</accession>
<name>TAN1_MAIZE</name>
<evidence type="ECO:0000256" key="1">
    <source>
        <dbReference type="SAM" id="MobiDB-lite"/>
    </source>
</evidence>
<evidence type="ECO:0000269" key="2">
    <source>
    </source>
</evidence>
<evidence type="ECO:0000269" key="3">
    <source>
    </source>
</evidence>
<evidence type="ECO:0000269" key="4">
    <source>
    </source>
</evidence>
<evidence type="ECO:0000303" key="5">
    <source>
    </source>
</evidence>
<keyword id="KW-0025">Alternative splicing</keyword>
<keyword id="KW-0963">Cytoplasm</keyword>
<keyword id="KW-0206">Cytoskeleton</keyword>
<keyword id="KW-1185">Reference proteome</keyword>
<protein>
    <recommendedName>
        <fullName>Microtubule-binding protein TANGLED1</fullName>
    </recommendedName>
    <alternativeName>
        <fullName>Protein PIGMY1</fullName>
    </alternativeName>
</protein>
<proteinExistence type="evidence at transcript level"/>
<gene>
    <name type="primary">TAN1</name>
    <name type="synonym">PY1</name>
    <name type="ORF">ZEAMMB73_420432</name>
</gene>
<comment type="function">
    <text evidence="2 3 4">Is required for spatial control cell division during leaf development. Through an association with microtubules, acts both for the positioning of cytoskeletal arrays that establish planes of cell division during prophase and for spatial guidance of expanding phragmoplasts toward preestablished cortical division sites (CDS) during cytokinesis.</text>
</comment>
<comment type="subcellular location">
    <subcellularLocation>
        <location evidence="2">Cytoplasm</location>
    </subcellularLocation>
    <subcellularLocation>
        <location evidence="2">Cytoplasm</location>
        <location evidence="2">Cytoskeleton</location>
    </subcellularLocation>
    <subcellularLocation>
        <location evidence="2">Cytoplasm</location>
        <location evidence="2">Cytoskeleton</location>
        <location evidence="2">Spindle</location>
    </subcellularLocation>
    <subcellularLocation>
        <location evidence="2">Cytoplasm</location>
        <location evidence="2">Cytoskeleton</location>
        <location evidence="2">Phragmoplast</location>
    </subcellularLocation>
    <text>Preferentially localized to the preprophase band (PPB) during mitotic division.</text>
</comment>
<comment type="alternative products">
    <event type="alternative splicing"/>
    <isoform>
        <id>Q9FUH9-1</id>
        <name>1</name>
        <sequence type="displayed"/>
    </isoform>
    <isoform>
        <id>Q9FUH9-2</id>
        <name>2</name>
        <sequence type="described" ref="VSP_000000"/>
    </isoform>
</comment>
<comment type="tissue specificity">
    <text evidence="2">Expressed in vegetative shoot tips consisting of leaf primordia and the bases of immature leaves, the shoot apical meristem, and unexpanded stem tissue. Strongly expressed in tissues enriched in dividing cells: ear primordia and embryos.</text>
</comment>
<comment type="disruption phenotype">
    <text evidence="3 4">Mutant tan1 displays a shorter stature with smaller, more erect leaves than normal. Moreover, mutant leaves have a distinctly roughened, crepe-papery texture compared to the smooth surface of a normal leaf.</text>
</comment>
<feature type="chain" id="PRO_0000423587" description="Microtubule-binding protein TANGLED1">
    <location>
        <begin position="1"/>
        <end position="386"/>
    </location>
</feature>
<feature type="region of interest" description="Disordered" evidence="1">
    <location>
        <begin position="83"/>
        <end position="105"/>
    </location>
</feature>
<feature type="region of interest" description="Disordered" evidence="1">
    <location>
        <begin position="140"/>
        <end position="202"/>
    </location>
</feature>
<feature type="region of interest" description="Disordered" evidence="1">
    <location>
        <begin position="244"/>
        <end position="266"/>
    </location>
</feature>
<feature type="region of interest" description="Disordered" evidence="1">
    <location>
        <begin position="303"/>
        <end position="330"/>
    </location>
</feature>
<feature type="region of interest" description="Disordered" evidence="1">
    <location>
        <begin position="345"/>
        <end position="386"/>
    </location>
</feature>
<feature type="compositionally biased region" description="Basic residues" evidence="1">
    <location>
        <begin position="170"/>
        <end position="180"/>
    </location>
</feature>
<feature type="compositionally biased region" description="Low complexity" evidence="1">
    <location>
        <begin position="181"/>
        <end position="193"/>
    </location>
</feature>
<feature type="compositionally biased region" description="Polar residues" evidence="1">
    <location>
        <begin position="375"/>
        <end position="386"/>
    </location>
</feature>
<feature type="splice variant" id="VSP_000000" description="In isoform 2." evidence="5">
    <original>V</original>
    <variation>VRQVFWLCSPSEFGPRRSLAHACESVSYSDSCRR</variation>
    <location>
        <position position="82"/>
    </location>
</feature>
<dbReference type="EMBL" id="AF305892">
    <property type="protein sequence ID" value="AAG33234.1"/>
    <property type="molecule type" value="mRNA"/>
</dbReference>
<dbReference type="EMBL" id="BT069123">
    <property type="protein sequence ID" value="ACN36020.1"/>
    <property type="molecule type" value="mRNA"/>
</dbReference>
<dbReference type="EMBL" id="BT069417">
    <property type="protein sequence ID" value="ACN36314.1"/>
    <property type="molecule type" value="mRNA"/>
</dbReference>
<dbReference type="RefSeq" id="NP_001105636.1">
    <molecule id="Q9FUH9-1"/>
    <property type="nucleotide sequence ID" value="NM_001112166.1"/>
</dbReference>
<dbReference type="RefSeq" id="XP_008648317.1">
    <property type="nucleotide sequence ID" value="XM_008650095.1"/>
</dbReference>
<dbReference type="FunCoup" id="Q9FUH9">
    <property type="interactions" value="889"/>
</dbReference>
<dbReference type="STRING" id="4577.Q9FUH9"/>
<dbReference type="PaxDb" id="4577-GRMZM2G039113_P02"/>
<dbReference type="EnsemblPlants" id="Zm00001eb286860_T002">
    <molecule id="Q9FUH9-2"/>
    <property type="protein sequence ID" value="Zm00001eb286860_P002"/>
    <property type="gene ID" value="Zm00001eb286860"/>
</dbReference>
<dbReference type="EnsemblPlants" id="Zm00001eb286860_T003">
    <molecule id="Q9FUH9-1"/>
    <property type="protein sequence ID" value="Zm00001eb286860_P003"/>
    <property type="gene ID" value="Zm00001eb286860"/>
</dbReference>
<dbReference type="GeneID" id="542642"/>
<dbReference type="Gramene" id="Zm00001eb286860_T002">
    <molecule id="Q9FUH9-2"/>
    <property type="protein sequence ID" value="Zm00001eb286860_P002"/>
    <property type="gene ID" value="Zm00001eb286860"/>
</dbReference>
<dbReference type="Gramene" id="Zm00001eb286860_T003">
    <molecule id="Q9FUH9-1"/>
    <property type="protein sequence ID" value="Zm00001eb286860_P003"/>
    <property type="gene ID" value="Zm00001eb286860"/>
</dbReference>
<dbReference type="KEGG" id="zma:542642"/>
<dbReference type="MaizeGDB" id="12573"/>
<dbReference type="eggNOG" id="KOG1674">
    <property type="taxonomic scope" value="Eukaryota"/>
</dbReference>
<dbReference type="InParanoid" id="Q9FUH9"/>
<dbReference type="OMA" id="NNKGRRC"/>
<dbReference type="OrthoDB" id="1939732at2759"/>
<dbReference type="Proteomes" id="UP000007305">
    <property type="component" value="Chromosome 6"/>
</dbReference>
<dbReference type="ExpressionAtlas" id="Q9FUH9">
    <property type="expression patterns" value="baseline and differential"/>
</dbReference>
<dbReference type="GO" id="GO:0005875">
    <property type="term" value="C:microtubule associated complex"/>
    <property type="evidence" value="ECO:0000318"/>
    <property type="project" value="GO_Central"/>
</dbReference>
<dbReference type="GO" id="GO:0009524">
    <property type="term" value="C:phragmoplast"/>
    <property type="evidence" value="ECO:0007669"/>
    <property type="project" value="UniProtKB-SubCell"/>
</dbReference>
<dbReference type="GO" id="GO:0009574">
    <property type="term" value="C:preprophase band"/>
    <property type="evidence" value="ECO:0000318"/>
    <property type="project" value="GO_Central"/>
</dbReference>
<dbReference type="GO" id="GO:0005819">
    <property type="term" value="C:spindle"/>
    <property type="evidence" value="ECO:0007669"/>
    <property type="project" value="UniProtKB-SubCell"/>
</dbReference>
<dbReference type="GO" id="GO:0008017">
    <property type="term" value="F:microtubule binding"/>
    <property type="evidence" value="ECO:0007669"/>
    <property type="project" value="InterPro"/>
</dbReference>
<dbReference type="GO" id="GO:0000911">
    <property type="term" value="P:cytokinesis by cell plate formation"/>
    <property type="evidence" value="ECO:0000318"/>
    <property type="project" value="GO_Central"/>
</dbReference>
<dbReference type="GO" id="GO:2000694">
    <property type="term" value="P:regulation of phragmoplast microtubule organization"/>
    <property type="evidence" value="ECO:0007669"/>
    <property type="project" value="InterPro"/>
</dbReference>
<dbReference type="InterPro" id="IPR044709">
    <property type="entry name" value="TAN1"/>
</dbReference>
<dbReference type="PANTHER" id="PTHR35728">
    <property type="entry name" value="MICROTUBULE-BINDING PROTEIN TANGLED-RELATED"/>
    <property type="match status" value="1"/>
</dbReference>
<dbReference type="PANTHER" id="PTHR35728:SF1">
    <property type="entry name" value="MICROTUBULE-BINDING PROTEIN TANGLED-RELATED"/>
    <property type="match status" value="1"/>
</dbReference>
<reference key="1">
    <citation type="journal article" date="2001" name="J. Cell Biol.">
        <title>Tangled1: a microtubule binding protein required for the spatial control of cytokinesis in maize.</title>
        <authorList>
            <person name="Smith L.G."/>
            <person name="Gerttula S.M."/>
            <person name="Han S."/>
            <person name="Levy J."/>
        </authorList>
    </citation>
    <scope>NUCLEOTIDE SEQUENCE [MRNA] (ISOFORM 1)</scope>
    <scope>FUNCTION</scope>
    <scope>TISSUE SPECIFICITY</scope>
    <scope>SUBCELLULAR LOCATION</scope>
</reference>
<reference key="2">
    <citation type="journal article" date="2009" name="PLoS Genet.">
        <title>Sequencing, mapping, and analysis of 27,455 maize full-length cDNAs.</title>
        <authorList>
            <person name="Soderlund C."/>
            <person name="Descour A."/>
            <person name="Kudrna D."/>
            <person name="Bomhoff M."/>
            <person name="Boyd L."/>
            <person name="Currie J."/>
            <person name="Angelova A."/>
            <person name="Collura K."/>
            <person name="Wissotski M."/>
            <person name="Ashley E."/>
            <person name="Morrow D."/>
            <person name="Fernandes J."/>
            <person name="Walbot V."/>
            <person name="Yu Y."/>
        </authorList>
    </citation>
    <scope>NUCLEOTIDE SEQUENCE [LARGE SCALE MRNA] (ISOFORMS 1 AND 2)</scope>
    <source>
        <strain>cv. B73</strain>
    </source>
</reference>
<reference key="3">
    <citation type="journal article" date="1996" name="Development">
        <title>The tangled-1 mutation alters cell division orientations throughout maize leaf development without altering leaf shape.</title>
        <authorList>
            <person name="Smith L.G."/>
            <person name="Hake S."/>
            <person name="Sylvester A.W."/>
        </authorList>
    </citation>
    <scope>FUNCTION</scope>
    <scope>MUTANT TAN1</scope>
    <scope>DISRUPTION PHENOTYPE</scope>
</reference>
<reference key="4">
    <citation type="journal article" date="1998" name="Plant Cell">
        <title>The Tangled1 gene is required for spatial control of cytoskeletal arrays associated with cell division during maize leaf development.</title>
        <authorList>
            <person name="Cleary A.L."/>
            <person name="Smith L.G."/>
        </authorList>
    </citation>
    <scope>FUNCTION</scope>
    <scope>DISRUPTION PHENOTYPE</scope>
</reference>